<reference key="1">
    <citation type="submission" date="2009-01" db="EMBL/GenBank/DDBJ databases">
        <title>Complete sequence of Clostridium cellulolyticum H10.</title>
        <authorList>
            <consortium name="US DOE Joint Genome Institute"/>
            <person name="Lucas S."/>
            <person name="Copeland A."/>
            <person name="Lapidus A."/>
            <person name="Glavina del Rio T."/>
            <person name="Dalin E."/>
            <person name="Tice H."/>
            <person name="Bruce D."/>
            <person name="Goodwin L."/>
            <person name="Pitluck S."/>
            <person name="Chertkov O."/>
            <person name="Saunders E."/>
            <person name="Brettin T."/>
            <person name="Detter J.C."/>
            <person name="Han C."/>
            <person name="Larimer F."/>
            <person name="Land M."/>
            <person name="Hauser L."/>
            <person name="Kyrpides N."/>
            <person name="Ivanova N."/>
            <person name="Zhou J."/>
            <person name="Richardson P."/>
        </authorList>
    </citation>
    <scope>NUCLEOTIDE SEQUENCE [LARGE SCALE GENOMIC DNA]</scope>
    <source>
        <strain>ATCC 35319 / DSM 5812 / JCM 6584 / H10</strain>
    </source>
</reference>
<protein>
    <recommendedName>
        <fullName evidence="1">Dihydroxy-acid dehydratase</fullName>
        <shortName evidence="1">DAD</shortName>
        <ecNumber evidence="1">4.2.1.9</ecNumber>
    </recommendedName>
</protein>
<feature type="chain" id="PRO_1000190659" description="Dihydroxy-acid dehydratase">
    <location>
        <begin position="1"/>
        <end position="552"/>
    </location>
</feature>
<feature type="active site" description="Proton acceptor" evidence="1">
    <location>
        <position position="468"/>
    </location>
</feature>
<feature type="binding site" evidence="1">
    <location>
        <position position="78"/>
    </location>
    <ligand>
        <name>Mg(2+)</name>
        <dbReference type="ChEBI" id="CHEBI:18420"/>
    </ligand>
</feature>
<feature type="binding site" evidence="1">
    <location>
        <position position="119"/>
    </location>
    <ligand>
        <name>[2Fe-2S] cluster</name>
        <dbReference type="ChEBI" id="CHEBI:190135"/>
    </ligand>
</feature>
<feature type="binding site" evidence="1">
    <location>
        <position position="120"/>
    </location>
    <ligand>
        <name>Mg(2+)</name>
        <dbReference type="ChEBI" id="CHEBI:18420"/>
    </ligand>
</feature>
<feature type="binding site" description="via carbamate group" evidence="1">
    <location>
        <position position="121"/>
    </location>
    <ligand>
        <name>Mg(2+)</name>
        <dbReference type="ChEBI" id="CHEBI:18420"/>
    </ligand>
</feature>
<feature type="binding site" evidence="1">
    <location>
        <position position="191"/>
    </location>
    <ligand>
        <name>[2Fe-2S] cluster</name>
        <dbReference type="ChEBI" id="CHEBI:190135"/>
    </ligand>
</feature>
<feature type="binding site" evidence="1">
    <location>
        <position position="442"/>
    </location>
    <ligand>
        <name>Mg(2+)</name>
        <dbReference type="ChEBI" id="CHEBI:18420"/>
    </ligand>
</feature>
<feature type="modified residue" description="N6-carboxylysine" evidence="1">
    <location>
        <position position="121"/>
    </location>
</feature>
<sequence length="552" mass="58548">MRSDIVKKGIEKAPHRSLFKAMGYTDEELERPLIGVANSKSEIIPGHIHLDKLTEAVKAGIRMAGGTPIEFGAIGVCDGIAMGHTGMKYSLATRELIADSCEAMSKAHSFDGMVFIPNCDKIVPGMLMAAARINIPSIVISGGPMLSLNRDGKQLDLNSLFEAVGSYKAGTMTKEEVDDIEDHACPGCGSCSGMFTANSMNCLTEVLGMGLTGNGTIPAVYAERIRLAKYAGMKIMELVEKDIKPSDILTNEAFENALTVDMALGCSTNSVLHLPAIANELGIEINLDIINEISSRTPNLCKLAPAGKYHIQDLYSAGGVQAVMSELAKKDLLHLDLVTATGKTIRENIQNAKVKDYEIVKSIDTPYSATGGIAVLRGNIAPDGAVVKKSAVAEKMLIHTGPARVFDSEDEAITAIYSGQINKGDVVIIRYEGPKGGPGMREMLSPTSAIAGMGLDSDVALITDGRFSGASRGASIGHVSPEAMEGGPIALVQEGDIVDIDIPAGRINIQVTNEEMVKRKESWKAPKPKITTGYLGRYARLVTSASTGAVLK</sequence>
<name>ILVD_RUMCH</name>
<organism>
    <name type="scientific">Ruminiclostridium cellulolyticum (strain ATCC 35319 / DSM 5812 / JCM 6584 / H10)</name>
    <name type="common">Clostridium cellulolyticum</name>
    <dbReference type="NCBI Taxonomy" id="394503"/>
    <lineage>
        <taxon>Bacteria</taxon>
        <taxon>Bacillati</taxon>
        <taxon>Bacillota</taxon>
        <taxon>Clostridia</taxon>
        <taxon>Eubacteriales</taxon>
        <taxon>Oscillospiraceae</taxon>
        <taxon>Ruminiclostridium</taxon>
    </lineage>
</organism>
<evidence type="ECO:0000255" key="1">
    <source>
        <dbReference type="HAMAP-Rule" id="MF_00012"/>
    </source>
</evidence>
<gene>
    <name evidence="1" type="primary">ilvD</name>
    <name type="ordered locus">Ccel_0302</name>
</gene>
<proteinExistence type="inferred from homology"/>
<dbReference type="EC" id="4.2.1.9" evidence="1"/>
<dbReference type="EMBL" id="CP001348">
    <property type="protein sequence ID" value="ACL74689.1"/>
    <property type="molecule type" value="Genomic_DNA"/>
</dbReference>
<dbReference type="RefSeq" id="WP_012634754.1">
    <property type="nucleotide sequence ID" value="NC_011898.1"/>
</dbReference>
<dbReference type="SMR" id="B8I5A9"/>
<dbReference type="STRING" id="394503.Ccel_0302"/>
<dbReference type="KEGG" id="cce:Ccel_0302"/>
<dbReference type="eggNOG" id="COG0129">
    <property type="taxonomic scope" value="Bacteria"/>
</dbReference>
<dbReference type="HOGENOM" id="CLU_014271_4_2_9"/>
<dbReference type="OrthoDB" id="9807077at2"/>
<dbReference type="UniPathway" id="UPA00047">
    <property type="reaction ID" value="UER00057"/>
</dbReference>
<dbReference type="UniPathway" id="UPA00049">
    <property type="reaction ID" value="UER00061"/>
</dbReference>
<dbReference type="Proteomes" id="UP000001349">
    <property type="component" value="Chromosome"/>
</dbReference>
<dbReference type="GO" id="GO:0005829">
    <property type="term" value="C:cytosol"/>
    <property type="evidence" value="ECO:0007669"/>
    <property type="project" value="TreeGrafter"/>
</dbReference>
<dbReference type="GO" id="GO:0051537">
    <property type="term" value="F:2 iron, 2 sulfur cluster binding"/>
    <property type="evidence" value="ECO:0007669"/>
    <property type="project" value="UniProtKB-UniRule"/>
</dbReference>
<dbReference type="GO" id="GO:0004160">
    <property type="term" value="F:dihydroxy-acid dehydratase activity"/>
    <property type="evidence" value="ECO:0007669"/>
    <property type="project" value="UniProtKB-UniRule"/>
</dbReference>
<dbReference type="GO" id="GO:0000287">
    <property type="term" value="F:magnesium ion binding"/>
    <property type="evidence" value="ECO:0007669"/>
    <property type="project" value="UniProtKB-UniRule"/>
</dbReference>
<dbReference type="GO" id="GO:0009097">
    <property type="term" value="P:isoleucine biosynthetic process"/>
    <property type="evidence" value="ECO:0007669"/>
    <property type="project" value="UniProtKB-UniRule"/>
</dbReference>
<dbReference type="GO" id="GO:0009099">
    <property type="term" value="P:L-valine biosynthetic process"/>
    <property type="evidence" value="ECO:0007669"/>
    <property type="project" value="UniProtKB-UniRule"/>
</dbReference>
<dbReference type="FunFam" id="3.50.30.80:FF:000001">
    <property type="entry name" value="Dihydroxy-acid dehydratase"/>
    <property type="match status" value="1"/>
</dbReference>
<dbReference type="Gene3D" id="3.50.30.80">
    <property type="entry name" value="IlvD/EDD C-terminal domain-like"/>
    <property type="match status" value="1"/>
</dbReference>
<dbReference type="HAMAP" id="MF_00012">
    <property type="entry name" value="IlvD"/>
    <property type="match status" value="1"/>
</dbReference>
<dbReference type="InterPro" id="IPR042096">
    <property type="entry name" value="Dihydro-acid_dehy_C"/>
</dbReference>
<dbReference type="InterPro" id="IPR004404">
    <property type="entry name" value="DihydroxyA_deHydtase"/>
</dbReference>
<dbReference type="InterPro" id="IPR020558">
    <property type="entry name" value="DiOHA_6PGluconate_deHydtase_CS"/>
</dbReference>
<dbReference type="InterPro" id="IPR056740">
    <property type="entry name" value="ILV_EDD_C"/>
</dbReference>
<dbReference type="InterPro" id="IPR000581">
    <property type="entry name" value="ILV_EDD_N"/>
</dbReference>
<dbReference type="InterPro" id="IPR037237">
    <property type="entry name" value="IlvD/EDD_N"/>
</dbReference>
<dbReference type="NCBIfam" id="TIGR00110">
    <property type="entry name" value="ilvD"/>
    <property type="match status" value="1"/>
</dbReference>
<dbReference type="NCBIfam" id="NF002068">
    <property type="entry name" value="PRK00911.1"/>
    <property type="match status" value="1"/>
</dbReference>
<dbReference type="PANTHER" id="PTHR43661">
    <property type="entry name" value="D-XYLONATE DEHYDRATASE"/>
    <property type="match status" value="1"/>
</dbReference>
<dbReference type="PANTHER" id="PTHR43661:SF3">
    <property type="entry name" value="D-XYLONATE DEHYDRATASE YAGF-RELATED"/>
    <property type="match status" value="1"/>
</dbReference>
<dbReference type="Pfam" id="PF24877">
    <property type="entry name" value="ILV_EDD_C"/>
    <property type="match status" value="1"/>
</dbReference>
<dbReference type="Pfam" id="PF00920">
    <property type="entry name" value="ILVD_EDD_N"/>
    <property type="match status" value="1"/>
</dbReference>
<dbReference type="SUPFAM" id="SSF143975">
    <property type="entry name" value="IlvD/EDD N-terminal domain-like"/>
    <property type="match status" value="1"/>
</dbReference>
<dbReference type="SUPFAM" id="SSF52016">
    <property type="entry name" value="LeuD/IlvD-like"/>
    <property type="match status" value="1"/>
</dbReference>
<dbReference type="PROSITE" id="PS00886">
    <property type="entry name" value="ILVD_EDD_1"/>
    <property type="match status" value="1"/>
</dbReference>
<dbReference type="PROSITE" id="PS00887">
    <property type="entry name" value="ILVD_EDD_2"/>
    <property type="match status" value="1"/>
</dbReference>
<comment type="function">
    <text evidence="1">Functions in the biosynthesis of branched-chain amino acids. Catalyzes the dehydration of (2R,3R)-2,3-dihydroxy-3-methylpentanoate (2,3-dihydroxy-3-methylvalerate) into 2-oxo-3-methylpentanoate (2-oxo-3-methylvalerate) and of (2R)-2,3-dihydroxy-3-methylbutanoate (2,3-dihydroxyisovalerate) into 2-oxo-3-methylbutanoate (2-oxoisovalerate), the penultimate precursor to L-isoleucine and L-valine, respectively.</text>
</comment>
<comment type="catalytic activity">
    <reaction evidence="1">
        <text>(2R)-2,3-dihydroxy-3-methylbutanoate = 3-methyl-2-oxobutanoate + H2O</text>
        <dbReference type="Rhea" id="RHEA:24809"/>
        <dbReference type="ChEBI" id="CHEBI:11851"/>
        <dbReference type="ChEBI" id="CHEBI:15377"/>
        <dbReference type="ChEBI" id="CHEBI:49072"/>
        <dbReference type="EC" id="4.2.1.9"/>
    </reaction>
    <physiologicalReaction direction="left-to-right" evidence="1">
        <dbReference type="Rhea" id="RHEA:24810"/>
    </physiologicalReaction>
</comment>
<comment type="catalytic activity">
    <reaction evidence="1">
        <text>(2R,3R)-2,3-dihydroxy-3-methylpentanoate = (S)-3-methyl-2-oxopentanoate + H2O</text>
        <dbReference type="Rhea" id="RHEA:27694"/>
        <dbReference type="ChEBI" id="CHEBI:15377"/>
        <dbReference type="ChEBI" id="CHEBI:35146"/>
        <dbReference type="ChEBI" id="CHEBI:49258"/>
        <dbReference type="EC" id="4.2.1.9"/>
    </reaction>
    <physiologicalReaction direction="left-to-right" evidence="1">
        <dbReference type="Rhea" id="RHEA:27695"/>
    </physiologicalReaction>
</comment>
<comment type="cofactor">
    <cofactor evidence="1">
        <name>[2Fe-2S] cluster</name>
        <dbReference type="ChEBI" id="CHEBI:190135"/>
    </cofactor>
    <text evidence="1">Binds 1 [2Fe-2S] cluster per subunit. This cluster acts as a Lewis acid cofactor.</text>
</comment>
<comment type="cofactor">
    <cofactor evidence="1">
        <name>Mg(2+)</name>
        <dbReference type="ChEBI" id="CHEBI:18420"/>
    </cofactor>
</comment>
<comment type="pathway">
    <text evidence="1">Amino-acid biosynthesis; L-isoleucine biosynthesis; L-isoleucine from 2-oxobutanoate: step 3/4.</text>
</comment>
<comment type="pathway">
    <text evidence="1">Amino-acid biosynthesis; L-valine biosynthesis; L-valine from pyruvate: step 3/4.</text>
</comment>
<comment type="subunit">
    <text evidence="1">Homodimer.</text>
</comment>
<comment type="similarity">
    <text evidence="1">Belongs to the IlvD/Edd family.</text>
</comment>
<keyword id="KW-0001">2Fe-2S</keyword>
<keyword id="KW-0028">Amino-acid biosynthesis</keyword>
<keyword id="KW-0100">Branched-chain amino acid biosynthesis</keyword>
<keyword id="KW-0408">Iron</keyword>
<keyword id="KW-0411">Iron-sulfur</keyword>
<keyword id="KW-0456">Lyase</keyword>
<keyword id="KW-0460">Magnesium</keyword>
<keyword id="KW-0479">Metal-binding</keyword>
<keyword id="KW-1185">Reference proteome</keyword>
<accession>B8I5A9</accession>